<proteinExistence type="evidence at protein level"/>
<organism>
    <name type="scientific">Gallus gallus</name>
    <name type="common">Chicken</name>
    <dbReference type="NCBI Taxonomy" id="9031"/>
    <lineage>
        <taxon>Eukaryota</taxon>
        <taxon>Metazoa</taxon>
        <taxon>Chordata</taxon>
        <taxon>Craniata</taxon>
        <taxon>Vertebrata</taxon>
        <taxon>Euteleostomi</taxon>
        <taxon>Archelosauria</taxon>
        <taxon>Archosauria</taxon>
        <taxon>Dinosauria</taxon>
        <taxon>Saurischia</taxon>
        <taxon>Theropoda</taxon>
        <taxon>Coelurosauria</taxon>
        <taxon>Aves</taxon>
        <taxon>Neognathae</taxon>
        <taxon>Galloanserae</taxon>
        <taxon>Galliformes</taxon>
        <taxon>Phasianidae</taxon>
        <taxon>Phasianinae</taxon>
        <taxon>Gallus</taxon>
    </lineage>
</organism>
<sequence length="690" mass="74060">MDFHNILVMASEQQGLNAVPKRYSLAVGPPKKVPKVKGVESAAVQAFLRRKEEEKRKKELEEKRKKERLLAKRIELKHDRKARAMASRTKDNFYGYNGIPVEEKPKKRRRTCENVSQAPEAEYATENEAEQLEFAQTESEYEQEEYDEKPSKAAVKPKAPPKSAPAPLNFADLLRLAEKKQYEPVEIKVVKKIEERPRTAEELREREYLERKNKRVETQKKKSEKEVKSAGISSSSKKATSLKECADAKLSRSAADKHAPPKSSLSSLSGTDKKPKAPALTEKHSRSFSSSKLSQMEKGKTSQNSSLKSPAAGSHSKLPANGMGKTGSSFPVPSSKPMANGAQRLPSAKESSLKKPVHTKPGNAAALQHETNSSAKRPSSSLGKGGSGHPAGGSSAGPGRSSSNSGTGPGRPGSVSSPGPGRQGSSSAAGPGRPSSSSSLGPGRLGSGSGVGPGRPGGSSSTGLGRPGGSSGTGPGRPGNSTNTAPGRLGSGMGTGPGRPGVGPSAGPGRPGSSSGTGPGRPGVSPSAGPGRPGLTAVKPRCTVVSETISSKNLVTRPSNGQINGMRSPPGHRPVFRPQGIGRPPVGYKRQIDDDDDDDEYDSEMDDFIEDEGEPQEEISKHIREIFGYDRKRYKDESDYALRYMESSWREQQKEEARSLRLGVQEDLEELRREEEELKRKRQSKKLRTR</sequence>
<gene>
    <name type="primary">SPTY2D1</name>
</gene>
<protein>
    <recommendedName>
        <fullName evidence="5">Protein SPT2 homolog</fullName>
    </recommendedName>
</protein>
<dbReference type="EMBL" id="JH374548">
    <property type="status" value="NOT_ANNOTATED_CDS"/>
    <property type="molecule type" value="Genomic_DNA"/>
</dbReference>
<dbReference type="EMBL" id="AADN03004619">
    <property type="status" value="NOT_ANNOTATED_CDS"/>
    <property type="molecule type" value="Genomic_DNA"/>
</dbReference>
<dbReference type="EMBL" id="AJ445824">
    <property type="status" value="NOT_ANNOTATED_CDS"/>
    <property type="molecule type" value="mRNA"/>
</dbReference>
<dbReference type="RefSeq" id="NP_001186523.1">
    <property type="nucleotide sequence ID" value="NM_001199594.2"/>
</dbReference>
<dbReference type="SMR" id="E1BUG7"/>
<dbReference type="FunCoup" id="E1BUG7">
    <property type="interactions" value="1651"/>
</dbReference>
<dbReference type="STRING" id="9031.ENSGALP00000010258"/>
<dbReference type="PaxDb" id="9031-ENSGALP00000010258"/>
<dbReference type="Ensembl" id="ENSGALT00010059808.1">
    <property type="protein sequence ID" value="ENSGALP00010036568.1"/>
    <property type="gene ID" value="ENSGALG00010024513.1"/>
</dbReference>
<dbReference type="GeneID" id="423083"/>
<dbReference type="KEGG" id="gga:423083"/>
<dbReference type="CTD" id="144108"/>
<dbReference type="VEuPathDB" id="HostDB:geneid_423083"/>
<dbReference type="eggNOG" id="ENOG502QWHS">
    <property type="taxonomic scope" value="Eukaryota"/>
</dbReference>
<dbReference type="GeneTree" id="ENSGT00940000154133"/>
<dbReference type="HOGENOM" id="CLU_025934_0_0_1"/>
<dbReference type="InParanoid" id="E1BUG7"/>
<dbReference type="OrthoDB" id="6259853at2759"/>
<dbReference type="PhylomeDB" id="E1BUG7"/>
<dbReference type="TreeFam" id="TF350176"/>
<dbReference type="PRO" id="PR:E1BUG7"/>
<dbReference type="Proteomes" id="UP000000539">
    <property type="component" value="Chromosome 5"/>
</dbReference>
<dbReference type="Bgee" id="ENSGALG00000006355">
    <property type="expression patterns" value="Expressed in granulocyte and 13 other cell types or tissues"/>
</dbReference>
<dbReference type="GO" id="GO:0005730">
    <property type="term" value="C:nucleolus"/>
    <property type="evidence" value="ECO:0000314"/>
    <property type="project" value="UniProtKB"/>
</dbReference>
<dbReference type="GO" id="GO:0005654">
    <property type="term" value="C:nucleoplasm"/>
    <property type="evidence" value="ECO:0007669"/>
    <property type="project" value="Ensembl"/>
</dbReference>
<dbReference type="GO" id="GO:0003677">
    <property type="term" value="F:DNA binding"/>
    <property type="evidence" value="ECO:0000250"/>
    <property type="project" value="UniProtKB"/>
</dbReference>
<dbReference type="GO" id="GO:0042393">
    <property type="term" value="F:histone binding"/>
    <property type="evidence" value="ECO:0000314"/>
    <property type="project" value="UniProtKB"/>
</dbReference>
<dbReference type="GO" id="GO:0140713">
    <property type="term" value="F:histone chaperone activity"/>
    <property type="evidence" value="ECO:0000250"/>
    <property type="project" value="UniProtKB"/>
</dbReference>
<dbReference type="GO" id="GO:0001042">
    <property type="term" value="F:RNA polymerase I core binding"/>
    <property type="evidence" value="ECO:0000314"/>
    <property type="project" value="UniProtKB"/>
</dbReference>
<dbReference type="GO" id="GO:0031507">
    <property type="term" value="P:heterochromatin formation"/>
    <property type="evidence" value="ECO:0000250"/>
    <property type="project" value="UniProtKB"/>
</dbReference>
<dbReference type="GO" id="GO:0006334">
    <property type="term" value="P:nucleosome assembly"/>
    <property type="evidence" value="ECO:0000250"/>
    <property type="project" value="UniProtKB"/>
</dbReference>
<dbReference type="GO" id="GO:0006355">
    <property type="term" value="P:regulation of DNA-templated transcription"/>
    <property type="evidence" value="ECO:0000250"/>
    <property type="project" value="UniProtKB"/>
</dbReference>
<dbReference type="GO" id="GO:0006360">
    <property type="term" value="P:transcription by RNA polymerase I"/>
    <property type="evidence" value="ECO:0000315"/>
    <property type="project" value="UniProtKB"/>
</dbReference>
<dbReference type="InterPro" id="IPR013256">
    <property type="entry name" value="Chromatin_SPT2"/>
</dbReference>
<dbReference type="InterPro" id="IPR054552">
    <property type="entry name" value="SPT2_N"/>
</dbReference>
<dbReference type="PANTHER" id="PTHR22691:SF8">
    <property type="entry name" value="PROTEIN SPT2 HOMOLOG"/>
    <property type="match status" value="1"/>
</dbReference>
<dbReference type="PANTHER" id="PTHR22691">
    <property type="entry name" value="YEAST SPT2-RELATED"/>
    <property type="match status" value="1"/>
</dbReference>
<dbReference type="Pfam" id="PF08243">
    <property type="entry name" value="SPT2"/>
    <property type="match status" value="1"/>
</dbReference>
<dbReference type="Pfam" id="PF22878">
    <property type="entry name" value="SPT2_N"/>
    <property type="match status" value="1"/>
</dbReference>
<dbReference type="SMART" id="SM00784">
    <property type="entry name" value="SPT2"/>
    <property type="match status" value="1"/>
</dbReference>
<feature type="chain" id="PRO_0000434723" description="Protein SPT2 homolog">
    <location>
        <begin position="1"/>
        <end position="690"/>
    </location>
</feature>
<feature type="region of interest" description="Important for interaction with DNA" evidence="1">
    <location>
        <begin position="1"/>
        <end position="579"/>
    </location>
</feature>
<feature type="region of interest" description="Disordered" evidence="3">
    <location>
        <begin position="105"/>
        <end position="167"/>
    </location>
</feature>
<feature type="region of interest" description="Disordered" evidence="3">
    <location>
        <begin position="186"/>
        <end position="619"/>
    </location>
</feature>
<feature type="region of interest" description="Important for interaction with histones" evidence="1">
    <location>
        <begin position="580"/>
        <end position="690"/>
    </location>
</feature>
<feature type="coiled-coil region" evidence="2">
    <location>
        <begin position="40"/>
        <end position="82"/>
    </location>
</feature>
<feature type="coiled-coil region" evidence="2">
    <location>
        <begin position="650"/>
        <end position="690"/>
    </location>
</feature>
<feature type="compositionally biased region" description="Basic and acidic residues" evidence="3">
    <location>
        <begin position="186"/>
        <end position="228"/>
    </location>
</feature>
<feature type="compositionally biased region" description="Low complexity" evidence="3">
    <location>
        <begin position="229"/>
        <end position="243"/>
    </location>
</feature>
<feature type="compositionally biased region" description="Basic and acidic residues" evidence="3">
    <location>
        <begin position="244"/>
        <end position="259"/>
    </location>
</feature>
<feature type="compositionally biased region" description="Basic and acidic residues" evidence="3">
    <location>
        <begin position="271"/>
        <end position="285"/>
    </location>
</feature>
<feature type="compositionally biased region" description="Polar residues" evidence="3">
    <location>
        <begin position="369"/>
        <end position="380"/>
    </location>
</feature>
<feature type="compositionally biased region" description="Gly residues" evidence="3">
    <location>
        <begin position="383"/>
        <end position="396"/>
    </location>
</feature>
<feature type="compositionally biased region" description="Low complexity" evidence="3">
    <location>
        <begin position="397"/>
        <end position="442"/>
    </location>
</feature>
<feature type="compositionally biased region" description="Gly residues" evidence="3">
    <location>
        <begin position="443"/>
        <end position="457"/>
    </location>
</feature>
<feature type="compositionally biased region" description="Gly residues" evidence="3">
    <location>
        <begin position="465"/>
        <end position="477"/>
    </location>
</feature>
<feature type="compositionally biased region" description="Gly residues" evidence="3">
    <location>
        <begin position="489"/>
        <end position="521"/>
    </location>
</feature>
<feature type="compositionally biased region" description="Polar residues" evidence="3">
    <location>
        <begin position="545"/>
        <end position="565"/>
    </location>
</feature>
<feature type="compositionally biased region" description="Acidic residues" evidence="3">
    <location>
        <begin position="593"/>
        <end position="617"/>
    </location>
</feature>
<name>SPT2_CHICK</name>
<accession>E1BUG7</accession>
<reference key="1">
    <citation type="journal article" date="2004" name="Nature">
        <title>Sequence and comparative analysis of the chicken genome provide unique perspectives on vertebrate evolution.</title>
        <authorList>
            <person name="Hillier L.W."/>
            <person name="Miller W."/>
            <person name="Birney E."/>
            <person name="Warren W."/>
            <person name="Hardison R.C."/>
            <person name="Ponting C.P."/>
            <person name="Bork P."/>
            <person name="Burt D.W."/>
            <person name="Groenen M.A.M."/>
            <person name="Delany M.E."/>
            <person name="Dodgson J.B."/>
            <person name="Chinwalla A.T."/>
            <person name="Cliften P.F."/>
            <person name="Clifton S.W."/>
            <person name="Delehaunty K.D."/>
            <person name="Fronick C."/>
            <person name="Fulton R.S."/>
            <person name="Graves T.A."/>
            <person name="Kremitzki C."/>
            <person name="Layman D."/>
            <person name="Magrini V."/>
            <person name="McPherson J.D."/>
            <person name="Miner T.L."/>
            <person name="Minx P."/>
            <person name="Nash W.E."/>
            <person name="Nhan M.N."/>
            <person name="Nelson J.O."/>
            <person name="Oddy L.G."/>
            <person name="Pohl C.S."/>
            <person name="Randall-Maher J."/>
            <person name="Smith S.M."/>
            <person name="Wallis J.W."/>
            <person name="Yang S.-P."/>
            <person name="Romanov M.N."/>
            <person name="Rondelli C.M."/>
            <person name="Paton B."/>
            <person name="Smith J."/>
            <person name="Morrice D."/>
            <person name="Daniels L."/>
            <person name="Tempest H.G."/>
            <person name="Robertson L."/>
            <person name="Masabanda J.S."/>
            <person name="Griffin D.K."/>
            <person name="Vignal A."/>
            <person name="Fillon V."/>
            <person name="Jacobbson L."/>
            <person name="Kerje S."/>
            <person name="Andersson L."/>
            <person name="Crooijmans R.P."/>
            <person name="Aerts J."/>
            <person name="van der Poel J.J."/>
            <person name="Ellegren H."/>
            <person name="Caldwell R.B."/>
            <person name="Hubbard S.J."/>
            <person name="Grafham D.V."/>
            <person name="Kierzek A.M."/>
            <person name="McLaren S.R."/>
            <person name="Overton I.M."/>
            <person name="Arakawa H."/>
            <person name="Beattie K.J."/>
            <person name="Bezzubov Y."/>
            <person name="Boardman P.E."/>
            <person name="Bonfield J.K."/>
            <person name="Croning M.D.R."/>
            <person name="Davies R.M."/>
            <person name="Francis M.D."/>
            <person name="Humphray S.J."/>
            <person name="Scott C.E."/>
            <person name="Taylor R.G."/>
            <person name="Tickle C."/>
            <person name="Brown W.R.A."/>
            <person name="Rogers J."/>
            <person name="Buerstedde J.-M."/>
            <person name="Wilson S.A."/>
            <person name="Stubbs L."/>
            <person name="Ovcharenko I."/>
            <person name="Gordon L."/>
            <person name="Lucas S."/>
            <person name="Miller M.M."/>
            <person name="Inoko H."/>
            <person name="Shiina T."/>
            <person name="Kaufman J."/>
            <person name="Salomonsen J."/>
            <person name="Skjoedt K."/>
            <person name="Wong G.K.-S."/>
            <person name="Wang J."/>
            <person name="Liu B."/>
            <person name="Wang J."/>
            <person name="Yu J."/>
            <person name="Yang H."/>
            <person name="Nefedov M."/>
            <person name="Koriabine M."/>
            <person name="Dejong P.J."/>
            <person name="Goodstadt L."/>
            <person name="Webber C."/>
            <person name="Dickens N.J."/>
            <person name="Letunic I."/>
            <person name="Suyama M."/>
            <person name="Torrents D."/>
            <person name="von Mering C."/>
            <person name="Zdobnov E.M."/>
            <person name="Makova K."/>
            <person name="Nekrutenko A."/>
            <person name="Elnitski L."/>
            <person name="Eswara P."/>
            <person name="King D.C."/>
            <person name="Yang S.-P."/>
            <person name="Tyekucheva S."/>
            <person name="Radakrishnan A."/>
            <person name="Harris R.S."/>
            <person name="Chiaromonte F."/>
            <person name="Taylor J."/>
            <person name="He J."/>
            <person name="Rijnkels M."/>
            <person name="Griffiths-Jones S."/>
            <person name="Ureta-Vidal A."/>
            <person name="Hoffman M.M."/>
            <person name="Severin J."/>
            <person name="Searle S.M.J."/>
            <person name="Law A.S."/>
            <person name="Speed D."/>
            <person name="Waddington D."/>
            <person name="Cheng Z."/>
            <person name="Tuzun E."/>
            <person name="Eichler E."/>
            <person name="Bao Z."/>
            <person name="Flicek P."/>
            <person name="Shteynberg D.D."/>
            <person name="Brent M.R."/>
            <person name="Bye J.M."/>
            <person name="Huckle E.J."/>
            <person name="Chatterji S."/>
            <person name="Dewey C."/>
            <person name="Pachter L."/>
            <person name="Kouranov A."/>
            <person name="Mourelatos Z."/>
            <person name="Hatzigeorgiou A.G."/>
            <person name="Paterson A.H."/>
            <person name="Ivarie R."/>
            <person name="Brandstrom M."/>
            <person name="Axelsson E."/>
            <person name="Backstrom N."/>
            <person name="Berlin S."/>
            <person name="Webster M.T."/>
            <person name="Pourquie O."/>
            <person name="Reymond A."/>
            <person name="Ucla C."/>
            <person name="Antonarakis S.E."/>
            <person name="Long M."/>
            <person name="Emerson J.J."/>
            <person name="Betran E."/>
            <person name="Dupanloup I."/>
            <person name="Kaessmann H."/>
            <person name="Hinrichs A.S."/>
            <person name="Bejerano G."/>
            <person name="Furey T.S."/>
            <person name="Harte R.A."/>
            <person name="Raney B."/>
            <person name="Siepel A."/>
            <person name="Kent W.J."/>
            <person name="Haussler D."/>
            <person name="Eyras E."/>
            <person name="Castelo R."/>
            <person name="Abril J.F."/>
            <person name="Castellano S."/>
            <person name="Camara F."/>
            <person name="Parra G."/>
            <person name="Guigo R."/>
            <person name="Bourque G."/>
            <person name="Tesler G."/>
            <person name="Pevzner P.A."/>
            <person name="Smit A."/>
            <person name="Fulton L.A."/>
            <person name="Mardis E.R."/>
            <person name="Wilson R.K."/>
        </authorList>
    </citation>
    <scope>NUCLEOTIDE SEQUENCE [LARGE SCALE GENOMIC DNA]</scope>
    <source>
        <strain evidence="6">Red jungle fowl</strain>
    </source>
</reference>
<reference key="2">
    <citation type="journal article" date="2005" name="Genome Biol.">
        <title>Full-length cDNAs from chicken bursal lymphocytes to facilitate gene function analysis.</title>
        <authorList>
            <person name="Caldwell R.B."/>
            <person name="Kierzek A.M."/>
            <person name="Arakawa H."/>
            <person name="Bezzubov Y."/>
            <person name="Zaim J."/>
            <person name="Fiedler P."/>
            <person name="Kutter S."/>
            <person name="Blagodatski A."/>
            <person name="Kostovska D."/>
            <person name="Koter M."/>
            <person name="Plachy J."/>
            <person name="Carninci P."/>
            <person name="Hayashizaki Y."/>
            <person name="Buerstedde J.-M."/>
        </authorList>
    </citation>
    <scope>NUCLEOTIDE SEQUENCE [LARGE SCALE MRNA] OF 1-207</scope>
    <source>
        <strain>CB</strain>
        <tissue>Bursa of Fabricius</tissue>
    </source>
</reference>
<reference key="3">
    <citation type="journal article" date="2013" name="J. Cell Sci.">
        <title>Vertebrate Spt2 is a novel nucleolar histone chaperone that assists in ribosomal DNA transcription.</title>
        <authorList>
            <person name="Osakabe A."/>
            <person name="Tachiwana H."/>
            <person name="Takaku M."/>
            <person name="Hori T."/>
            <person name="Obuse C."/>
            <person name="Kimura H."/>
            <person name="Fukagawa T."/>
            <person name="Kurumizaka H."/>
        </authorList>
    </citation>
    <scope>FUNCTION</scope>
    <scope>INTERACTION WITH POLR1A</scope>
    <scope>SUBCELLULAR LOCATION</scope>
</reference>
<comment type="function">
    <text evidence="1 4">Histone chaperone that stabilizes pre-existing histone tetramers and regulates replication-independent histone exchange on chromatin. Required for normal chromatin refolding in the coding region of transcribed genes, and for the suppression of spurious transcription. Binds DNA and histones and promotes nucleosome assembly (in vitro) (By similarity). Modulates RNA polymerase 1-mediated transcription (PubMed:23378026). Required for optimal growth in the presence of the DNA damaging agents actinomycin D or mitomycin C (in vitro) (PubMed:23378026). Facilitates formation of tetrameric histone complexes containing histone H3 and H4 (By similarity). Modulates RNA polymerase 1-mediated transcription (By similarity). Binds DNA, with a preference for branched DNA species, such as Y-form DNA and Holliday junction DNA (By similarity).</text>
</comment>
<comment type="subunit">
    <text evidence="1 4">Interacts with POLR1A (Probable) (PubMed:23378026). Interacts with histones (PubMed:23378026). Interacts with a heterotetrameric complex formed by histone H3 and H4, especially when the histone tetramer is not bound to DNA (By similarity).</text>
</comment>
<comment type="subcellular location">
    <subcellularLocation>
        <location evidence="4">Nucleus</location>
        <location evidence="4">Nucleolus</location>
    </subcellularLocation>
</comment>
<comment type="domain">
    <text evidence="1">The acidic C-terminal domain mediates interaction with histone H3/H4 complexes.</text>
</comment>
<comment type="similarity">
    <text evidence="5">Belongs to the SPT2 family.</text>
</comment>
<keyword id="KW-0175">Coiled coil</keyword>
<keyword id="KW-0238">DNA-binding</keyword>
<keyword id="KW-0539">Nucleus</keyword>
<keyword id="KW-1185">Reference proteome</keyword>
<keyword id="KW-0804">Transcription</keyword>
<keyword id="KW-0805">Transcription regulation</keyword>
<evidence type="ECO:0000250" key="1">
    <source>
        <dbReference type="UniProtKB" id="Q68D10"/>
    </source>
</evidence>
<evidence type="ECO:0000255" key="2"/>
<evidence type="ECO:0000256" key="3">
    <source>
        <dbReference type="SAM" id="MobiDB-lite"/>
    </source>
</evidence>
<evidence type="ECO:0000269" key="4">
    <source>
    </source>
</evidence>
<evidence type="ECO:0000305" key="5"/>
<evidence type="ECO:0000312" key="6">
    <source>
        <dbReference type="Proteomes" id="UP000000539"/>
    </source>
</evidence>